<accession>Q08AG7</accession>
<accession>Q5W0P5</accession>
<sequence length="82" mass="8479">MASSSGAGAAAAAAAANLNAVRETMDVLLEISRILNTGLDMETLSICVRLCEQGINPEALSSVIKELRKATEALKAAENMTS</sequence>
<feature type="initiator methionine" description="Removed" evidence="10">
    <location>
        <position position="1"/>
    </location>
</feature>
<feature type="chain" id="PRO_0000337015" description="Mitotic-spindle organizing protein 1">
    <location>
        <begin position="2"/>
        <end position="82"/>
    </location>
</feature>
<feature type="modified residue" description="N-acetylalanine" evidence="10">
    <location>
        <position position="2"/>
    </location>
</feature>
<feature type="sequence variant" id="VAR_043562" description="In dbSNP:rs1465896." evidence="1">
    <original>S</original>
    <variation>G</variation>
    <location>
        <position position="5"/>
    </location>
</feature>
<feature type="helix" evidence="11">
    <location>
        <begin position="16"/>
        <end position="34"/>
    </location>
</feature>
<feature type="helix" evidence="11">
    <location>
        <begin position="41"/>
        <end position="52"/>
    </location>
</feature>
<feature type="helix" evidence="11">
    <location>
        <begin position="57"/>
        <end position="69"/>
    </location>
</feature>
<feature type="turn" evidence="11">
    <location>
        <begin position="70"/>
        <end position="73"/>
    </location>
</feature>
<gene>
    <name type="primary">MZT1</name>
    <name type="synonym">C13orf37</name>
    <name type="synonym">MOZART1</name>
</gene>
<keyword id="KW-0002">3D-structure</keyword>
<keyword id="KW-0007">Acetylation</keyword>
<keyword id="KW-0963">Cytoplasm</keyword>
<keyword id="KW-0206">Cytoskeleton</keyword>
<keyword id="KW-1267">Proteomics identification</keyword>
<keyword id="KW-1185">Reference proteome</keyword>
<protein>
    <recommendedName>
        <fullName>Mitotic-spindle organizing protein 1</fullName>
    </recommendedName>
    <alternativeName>
        <fullName>Mitotic-spindle organizing protein associated with a ring of gamma-tubulin 1</fullName>
    </alternativeName>
</protein>
<dbReference type="EMBL" id="AL356754">
    <property type="status" value="NOT_ANNOTATED_CDS"/>
    <property type="molecule type" value="Genomic_DNA"/>
</dbReference>
<dbReference type="EMBL" id="AL138695">
    <property type="status" value="NOT_ANNOTATED_CDS"/>
    <property type="molecule type" value="Genomic_DNA"/>
</dbReference>
<dbReference type="EMBL" id="BC125183">
    <property type="protein sequence ID" value="AAI25184.1"/>
    <property type="molecule type" value="mRNA"/>
</dbReference>
<dbReference type="CCDS" id="CCDS31990.1"/>
<dbReference type="RefSeq" id="NP_001065243.1">
    <property type="nucleotide sequence ID" value="NM_001071775.3"/>
</dbReference>
<dbReference type="PDB" id="6L81">
    <property type="method" value="X-ray"/>
    <property type="resolution" value="2.20 A"/>
    <property type="chains" value="B/D=1-82"/>
</dbReference>
<dbReference type="PDB" id="6M33">
    <property type="method" value="X-ray"/>
    <property type="resolution" value="3.29 A"/>
    <property type="chains" value="B=1-82"/>
</dbReference>
<dbReference type="PDB" id="6X0U">
    <property type="method" value="EM"/>
    <property type="resolution" value="3.60 A"/>
    <property type="chains" value="A/C=1-82"/>
</dbReference>
<dbReference type="PDB" id="7AS4">
    <property type="method" value="EM"/>
    <property type="resolution" value="4.13 A"/>
    <property type="chains" value="5/6=1-82"/>
</dbReference>
<dbReference type="PDB" id="7QJ0">
    <property type="method" value="EM"/>
    <property type="resolution" value="5.32 A"/>
    <property type="chains" value="b/m=1-82"/>
</dbReference>
<dbReference type="PDB" id="7QJ1">
    <property type="method" value="EM"/>
    <property type="resolution" value="7.00 A"/>
    <property type="chains" value="b/m=1-82"/>
</dbReference>
<dbReference type="PDB" id="7QJ2">
    <property type="method" value="EM"/>
    <property type="resolution" value="8.60 A"/>
    <property type="chains" value="b/k/m=1-82"/>
</dbReference>
<dbReference type="PDB" id="7QJ3">
    <property type="method" value="EM"/>
    <property type="resolution" value="7.60 A"/>
    <property type="chains" value="b/m/o=1-82"/>
</dbReference>
<dbReference type="PDB" id="7QJ4">
    <property type="method" value="EM"/>
    <property type="resolution" value="9.00 A"/>
    <property type="chains" value="b/k/m/o=1-82"/>
</dbReference>
<dbReference type="PDB" id="7QJ5">
    <property type="method" value="EM"/>
    <property type="resolution" value="8.70 A"/>
    <property type="chains" value="b/d/g/i/k/m=1-82"/>
</dbReference>
<dbReference type="PDB" id="7QJ6">
    <property type="method" value="EM"/>
    <property type="resolution" value="7.80 A"/>
    <property type="chains" value="b/d/i/k/m=1-82"/>
</dbReference>
<dbReference type="PDB" id="7QJ7">
    <property type="method" value="EM"/>
    <property type="resolution" value="8.70 A"/>
    <property type="chains" value="b/d/g/i/k/m=1-82"/>
</dbReference>
<dbReference type="PDB" id="7QJ8">
    <property type="method" value="EM"/>
    <property type="resolution" value="8.70 A"/>
    <property type="chains" value="b/d/i/k/m=1-82"/>
</dbReference>
<dbReference type="PDB" id="7QJ9">
    <property type="method" value="EM"/>
    <property type="resolution" value="8.10 A"/>
    <property type="chains" value="b/d/i/k/m=1-82"/>
</dbReference>
<dbReference type="PDB" id="7QJA">
    <property type="method" value="EM"/>
    <property type="resolution" value="9.20 A"/>
    <property type="chains" value="b/d/g/i/k/m=1-82"/>
</dbReference>
<dbReference type="PDB" id="7QJB">
    <property type="method" value="EM"/>
    <property type="resolution" value="9.20 A"/>
    <property type="chains" value="b/d/i/k/m=1-82"/>
</dbReference>
<dbReference type="PDB" id="7QJC">
    <property type="method" value="EM"/>
    <property type="resolution" value="16.10 A"/>
    <property type="chains" value="b/d/g/i/k/m=1-82"/>
</dbReference>
<dbReference type="PDB" id="7QJD">
    <property type="method" value="EM"/>
    <property type="resolution" value="7.10 A"/>
    <property type="chains" value="b/d/g/i/k/m/o=1-82"/>
</dbReference>
<dbReference type="PDB" id="8RX1">
    <property type="method" value="EM"/>
    <property type="resolution" value="3.57 A"/>
    <property type="chains" value="a/c=1-82"/>
</dbReference>
<dbReference type="PDB" id="8VRD">
    <property type="method" value="EM"/>
    <property type="resolution" value="7.00 A"/>
    <property type="chains" value="Q/R=1-82"/>
</dbReference>
<dbReference type="PDB" id="8VRJ">
    <property type="method" value="EM"/>
    <property type="resolution" value="7.70 A"/>
    <property type="chains" value="7/8=1-82"/>
</dbReference>
<dbReference type="PDB" id="8VRK">
    <property type="method" value="EM"/>
    <property type="resolution" value="8.50 A"/>
    <property type="chains" value="7/8=1-82"/>
</dbReference>
<dbReference type="PDBsum" id="6L81"/>
<dbReference type="PDBsum" id="6M33"/>
<dbReference type="PDBsum" id="6X0U"/>
<dbReference type="PDBsum" id="7AS4"/>
<dbReference type="PDBsum" id="7QJ0"/>
<dbReference type="PDBsum" id="7QJ1"/>
<dbReference type="PDBsum" id="7QJ2"/>
<dbReference type="PDBsum" id="7QJ3"/>
<dbReference type="PDBsum" id="7QJ4"/>
<dbReference type="PDBsum" id="7QJ5"/>
<dbReference type="PDBsum" id="7QJ6"/>
<dbReference type="PDBsum" id="7QJ7"/>
<dbReference type="PDBsum" id="7QJ8"/>
<dbReference type="PDBsum" id="7QJ9"/>
<dbReference type="PDBsum" id="7QJA"/>
<dbReference type="PDBsum" id="7QJB"/>
<dbReference type="PDBsum" id="7QJC"/>
<dbReference type="PDBsum" id="7QJD"/>
<dbReference type="PDBsum" id="8RX1"/>
<dbReference type="PDBsum" id="8VRD"/>
<dbReference type="PDBsum" id="8VRJ"/>
<dbReference type="PDBsum" id="8VRK"/>
<dbReference type="EMDB" id="EMD-11888"/>
<dbReference type="EMDB" id="EMD-14005"/>
<dbReference type="EMDB" id="EMD-14006"/>
<dbReference type="EMDB" id="EMD-14007"/>
<dbReference type="EMDB" id="EMD-14008"/>
<dbReference type="EMDB" id="EMD-14009"/>
<dbReference type="EMDB" id="EMD-14010"/>
<dbReference type="EMDB" id="EMD-14011"/>
<dbReference type="EMDB" id="EMD-14012"/>
<dbReference type="EMDB" id="EMD-14013"/>
<dbReference type="EMDB" id="EMD-14014"/>
<dbReference type="EMDB" id="EMD-14015"/>
<dbReference type="EMDB" id="EMD-14016"/>
<dbReference type="EMDB" id="EMD-14017"/>
<dbReference type="EMDB" id="EMD-14018"/>
<dbReference type="EMDB" id="EMD-19570"/>
<dbReference type="EMDB" id="EMD-21984"/>
<dbReference type="EMDB" id="EMD-43481"/>
<dbReference type="EMDB" id="EMD-43482"/>
<dbReference type="EMDB" id="EMD-43483"/>
<dbReference type="SMR" id="Q08AG7"/>
<dbReference type="BioGRID" id="136335">
    <property type="interactions" value="67"/>
</dbReference>
<dbReference type="FunCoup" id="Q08AG7">
    <property type="interactions" value="678"/>
</dbReference>
<dbReference type="IntAct" id="Q08AG7">
    <property type="interactions" value="46"/>
</dbReference>
<dbReference type="STRING" id="9606.ENSP00000367049"/>
<dbReference type="iPTMnet" id="Q08AG7"/>
<dbReference type="PhosphoSitePlus" id="Q08AG7"/>
<dbReference type="BioMuta" id="MZT1"/>
<dbReference type="DMDM" id="189037059"/>
<dbReference type="jPOST" id="Q08AG7"/>
<dbReference type="MassIVE" id="Q08AG7"/>
<dbReference type="PaxDb" id="9606-ENSP00000367049"/>
<dbReference type="PeptideAtlas" id="Q08AG7"/>
<dbReference type="ProteomicsDB" id="58669"/>
<dbReference type="Pumba" id="Q08AG7"/>
<dbReference type="TopDownProteomics" id="Q08AG7"/>
<dbReference type="Antibodypedia" id="71297">
    <property type="antibodies" value="27 antibodies from 12 providers"/>
</dbReference>
<dbReference type="DNASU" id="440145"/>
<dbReference type="Ensembl" id="ENST00000377818.4">
    <property type="protein sequence ID" value="ENSP00000367049.3"/>
    <property type="gene ID" value="ENSG00000204899.6"/>
</dbReference>
<dbReference type="GeneID" id="440145"/>
<dbReference type="KEGG" id="hsa:440145"/>
<dbReference type="MANE-Select" id="ENST00000377818.4">
    <property type="protein sequence ID" value="ENSP00000367049.3"/>
    <property type="RefSeq nucleotide sequence ID" value="NM_001071775.3"/>
    <property type="RefSeq protein sequence ID" value="NP_001065243.1"/>
</dbReference>
<dbReference type="UCSC" id="uc001viu.3">
    <property type="organism name" value="human"/>
</dbReference>
<dbReference type="AGR" id="HGNC:33830"/>
<dbReference type="CTD" id="440145"/>
<dbReference type="GeneCards" id="MZT1"/>
<dbReference type="HGNC" id="HGNC:33830">
    <property type="gene designation" value="MZT1"/>
</dbReference>
<dbReference type="HPA" id="ENSG00000204899">
    <property type="expression patterns" value="Low tissue specificity"/>
</dbReference>
<dbReference type="MIM" id="613448">
    <property type="type" value="gene"/>
</dbReference>
<dbReference type="neXtProt" id="NX_Q08AG7"/>
<dbReference type="OpenTargets" id="ENSG00000204899"/>
<dbReference type="PharmGKB" id="PA165505227"/>
<dbReference type="VEuPathDB" id="HostDB:ENSG00000204899"/>
<dbReference type="eggNOG" id="ENOG502S6UI">
    <property type="taxonomic scope" value="Eukaryota"/>
</dbReference>
<dbReference type="GeneTree" id="ENSGT00390000005954"/>
<dbReference type="HOGENOM" id="CLU_160285_0_0_1"/>
<dbReference type="InParanoid" id="Q08AG7"/>
<dbReference type="OMA" id="LSICVGM"/>
<dbReference type="OrthoDB" id="48571at2759"/>
<dbReference type="PAN-GO" id="Q08AG7">
    <property type="GO annotations" value="5 GO annotations based on evolutionary models"/>
</dbReference>
<dbReference type="PhylomeDB" id="Q08AG7"/>
<dbReference type="TreeFam" id="TF328444"/>
<dbReference type="PathwayCommons" id="Q08AG7"/>
<dbReference type="Reactome" id="R-HSA-380270">
    <property type="pathway name" value="Recruitment of mitotic centrosome proteins and complexes"/>
</dbReference>
<dbReference type="Reactome" id="R-HSA-380320">
    <property type="pathway name" value="Recruitment of NuMA to mitotic centrosomes"/>
</dbReference>
<dbReference type="SignaLink" id="Q08AG7"/>
<dbReference type="BioGRID-ORCS" id="440145">
    <property type="hits" value="633 hits in 1130 CRISPR screens"/>
</dbReference>
<dbReference type="ChiTaRS" id="MZT1">
    <property type="organism name" value="human"/>
</dbReference>
<dbReference type="GenomeRNAi" id="440145"/>
<dbReference type="Pharos" id="Q08AG7">
    <property type="development level" value="Tdark"/>
</dbReference>
<dbReference type="PRO" id="PR:Q08AG7"/>
<dbReference type="Proteomes" id="UP000005640">
    <property type="component" value="Chromosome 13"/>
</dbReference>
<dbReference type="RNAct" id="Q08AG7">
    <property type="molecule type" value="protein"/>
</dbReference>
<dbReference type="Bgee" id="ENSG00000204899">
    <property type="expression patterns" value="Expressed in cerebellar vermis and 186 other cell types or tissues"/>
</dbReference>
<dbReference type="GO" id="GO:0005813">
    <property type="term" value="C:centrosome"/>
    <property type="evidence" value="ECO:0000314"/>
    <property type="project" value="UniProtKB"/>
</dbReference>
<dbReference type="GO" id="GO:0005829">
    <property type="term" value="C:cytosol"/>
    <property type="evidence" value="ECO:0000304"/>
    <property type="project" value="Reactome"/>
</dbReference>
<dbReference type="GO" id="GO:0000931">
    <property type="term" value="C:gamma-tubulin ring complex"/>
    <property type="evidence" value="ECO:0000314"/>
    <property type="project" value="UniProtKB"/>
</dbReference>
<dbReference type="GO" id="GO:0031021">
    <property type="term" value="C:interphase microtubule organizing center"/>
    <property type="evidence" value="ECO:0000318"/>
    <property type="project" value="GO_Central"/>
</dbReference>
<dbReference type="GO" id="GO:0005819">
    <property type="term" value="C:spindle"/>
    <property type="evidence" value="ECO:0000314"/>
    <property type="project" value="UniProtKB"/>
</dbReference>
<dbReference type="GO" id="GO:0033566">
    <property type="term" value="P:gamma-tubulin complex localization"/>
    <property type="evidence" value="ECO:0000315"/>
    <property type="project" value="UniProtKB"/>
</dbReference>
<dbReference type="GO" id="GO:0051415">
    <property type="term" value="P:microtubule nucleation by interphase microtubule organizing center"/>
    <property type="evidence" value="ECO:0000318"/>
    <property type="project" value="GO_Central"/>
</dbReference>
<dbReference type="GO" id="GO:0090307">
    <property type="term" value="P:mitotic spindle assembly"/>
    <property type="evidence" value="ECO:0000318"/>
    <property type="project" value="GO_Central"/>
</dbReference>
<dbReference type="InterPro" id="IPR022214">
    <property type="entry name" value="MZT1"/>
</dbReference>
<dbReference type="PANTHER" id="PTHR28520">
    <property type="entry name" value="MITOTIC-SPINDLE ORGANIZING PROTEIN 1"/>
    <property type="match status" value="1"/>
</dbReference>
<dbReference type="PANTHER" id="PTHR28520:SF2">
    <property type="entry name" value="MITOTIC-SPINDLE ORGANIZING PROTEIN 1"/>
    <property type="match status" value="1"/>
</dbReference>
<dbReference type="Pfam" id="PF12554">
    <property type="entry name" value="MOZART1"/>
    <property type="match status" value="1"/>
</dbReference>
<reference key="1">
    <citation type="journal article" date="2004" name="Nature">
        <title>The DNA sequence and analysis of human chromosome 13.</title>
        <authorList>
            <person name="Dunham A."/>
            <person name="Matthews L.H."/>
            <person name="Burton J."/>
            <person name="Ashurst J.L."/>
            <person name="Howe K.L."/>
            <person name="Ashcroft K.J."/>
            <person name="Beare D.M."/>
            <person name="Burford D.C."/>
            <person name="Hunt S.E."/>
            <person name="Griffiths-Jones S."/>
            <person name="Jones M.C."/>
            <person name="Keenan S.J."/>
            <person name="Oliver K."/>
            <person name="Scott C.E."/>
            <person name="Ainscough R."/>
            <person name="Almeida J.P."/>
            <person name="Ambrose K.D."/>
            <person name="Andrews D.T."/>
            <person name="Ashwell R.I.S."/>
            <person name="Babbage A.K."/>
            <person name="Bagguley C.L."/>
            <person name="Bailey J."/>
            <person name="Bannerjee R."/>
            <person name="Barlow K.F."/>
            <person name="Bates K."/>
            <person name="Beasley H."/>
            <person name="Bird C.P."/>
            <person name="Bray-Allen S."/>
            <person name="Brown A.J."/>
            <person name="Brown J.Y."/>
            <person name="Burrill W."/>
            <person name="Carder C."/>
            <person name="Carter N.P."/>
            <person name="Chapman J.C."/>
            <person name="Clamp M.E."/>
            <person name="Clark S.Y."/>
            <person name="Clarke G."/>
            <person name="Clee C.M."/>
            <person name="Clegg S.C."/>
            <person name="Cobley V."/>
            <person name="Collins J.E."/>
            <person name="Corby N."/>
            <person name="Coville G.J."/>
            <person name="Deloukas P."/>
            <person name="Dhami P."/>
            <person name="Dunham I."/>
            <person name="Dunn M."/>
            <person name="Earthrowl M.E."/>
            <person name="Ellington A.G."/>
            <person name="Faulkner L."/>
            <person name="Frankish A.G."/>
            <person name="Frankland J."/>
            <person name="French L."/>
            <person name="Garner P."/>
            <person name="Garnett J."/>
            <person name="Gilbert J.G.R."/>
            <person name="Gilson C.J."/>
            <person name="Ghori J."/>
            <person name="Grafham D.V."/>
            <person name="Gribble S.M."/>
            <person name="Griffiths C."/>
            <person name="Hall R.E."/>
            <person name="Hammond S."/>
            <person name="Harley J.L."/>
            <person name="Hart E.A."/>
            <person name="Heath P.D."/>
            <person name="Howden P.J."/>
            <person name="Huckle E.J."/>
            <person name="Hunt P.J."/>
            <person name="Hunt A.R."/>
            <person name="Johnson C."/>
            <person name="Johnson D."/>
            <person name="Kay M."/>
            <person name="Kimberley A.M."/>
            <person name="King A."/>
            <person name="Laird G.K."/>
            <person name="Langford C.J."/>
            <person name="Lawlor S."/>
            <person name="Leongamornlert D.A."/>
            <person name="Lloyd D.M."/>
            <person name="Lloyd C."/>
            <person name="Loveland J.E."/>
            <person name="Lovell J."/>
            <person name="Martin S."/>
            <person name="Mashreghi-Mohammadi M."/>
            <person name="McLaren S.J."/>
            <person name="McMurray A."/>
            <person name="Milne S."/>
            <person name="Moore M.J.F."/>
            <person name="Nickerson T."/>
            <person name="Palmer S.A."/>
            <person name="Pearce A.V."/>
            <person name="Peck A.I."/>
            <person name="Pelan S."/>
            <person name="Phillimore B."/>
            <person name="Porter K.M."/>
            <person name="Rice C.M."/>
            <person name="Searle S."/>
            <person name="Sehra H.K."/>
            <person name="Shownkeen R."/>
            <person name="Skuce C.D."/>
            <person name="Smith M."/>
            <person name="Steward C.A."/>
            <person name="Sycamore N."/>
            <person name="Tester J."/>
            <person name="Thomas D.W."/>
            <person name="Tracey A."/>
            <person name="Tromans A."/>
            <person name="Tubby B."/>
            <person name="Wall M."/>
            <person name="Wallis J.M."/>
            <person name="West A.P."/>
            <person name="Whitehead S.L."/>
            <person name="Willey D.L."/>
            <person name="Wilming L."/>
            <person name="Wray P.W."/>
            <person name="Wright M.W."/>
            <person name="Young L."/>
            <person name="Coulson A."/>
            <person name="Durbin R.M."/>
            <person name="Hubbard T."/>
            <person name="Sulston J.E."/>
            <person name="Beck S."/>
            <person name="Bentley D.R."/>
            <person name="Rogers J."/>
            <person name="Ross M.T."/>
        </authorList>
    </citation>
    <scope>NUCLEOTIDE SEQUENCE [LARGE SCALE GENOMIC DNA]</scope>
</reference>
<reference key="2">
    <citation type="journal article" date="2004" name="Genome Res.">
        <title>The status, quality, and expansion of the NIH full-length cDNA project: the Mammalian Gene Collection (MGC).</title>
        <authorList>
            <consortium name="The MGC Project Team"/>
        </authorList>
    </citation>
    <scope>NUCLEOTIDE SEQUENCE [LARGE SCALE MRNA]</scope>
    <scope>VARIANT GLY-5</scope>
</reference>
<reference key="3">
    <citation type="journal article" date="2010" name="Science">
        <title>Systematic analysis of human protein complexes identifies chromosome segregation proteins.</title>
        <authorList>
            <person name="Hutchins J.R."/>
            <person name="Toyoda Y."/>
            <person name="Hegemann B."/>
            <person name="Poser I."/>
            <person name="Heriche J.K."/>
            <person name="Sykora M.M."/>
            <person name="Augsburg M."/>
            <person name="Hudecz O."/>
            <person name="Buschhorn B.A."/>
            <person name="Bulkescher J."/>
            <person name="Conrad C."/>
            <person name="Comartin D."/>
            <person name="Schleiffer A."/>
            <person name="Sarov M."/>
            <person name="Pozniakovsky A."/>
            <person name="Slabicki M.M."/>
            <person name="Schloissnig S."/>
            <person name="Steinmacher I."/>
            <person name="Leuschner M."/>
            <person name="Ssykor A."/>
            <person name="Lawo S."/>
            <person name="Pelletier L."/>
            <person name="Stark H."/>
            <person name="Nasmyth K."/>
            <person name="Ellenberg J."/>
            <person name="Durbin R."/>
            <person name="Buchholz F."/>
            <person name="Mechtler K."/>
            <person name="Hyman A.A."/>
            <person name="Peters J.M."/>
        </authorList>
    </citation>
    <scope>FUNCTION</scope>
    <scope>SUBCELLULAR LOCATION</scope>
    <scope>INTERACTION WITH TUBG1</scope>
</reference>
<reference key="4">
    <citation type="journal article" date="2011" name="BMC Syst. Biol.">
        <title>Initial characterization of the human central proteome.</title>
        <authorList>
            <person name="Burkard T.R."/>
            <person name="Planyavsky M."/>
            <person name="Kaupe I."/>
            <person name="Breitwieser F.P."/>
            <person name="Buerckstuemmer T."/>
            <person name="Bennett K.L."/>
            <person name="Superti-Furga G."/>
            <person name="Colinge J."/>
        </authorList>
    </citation>
    <scope>IDENTIFICATION BY MASS SPECTROMETRY [LARGE SCALE ANALYSIS]</scope>
</reference>
<reference key="5">
    <citation type="journal article" date="2012" name="Proc. Natl. Acad. Sci. U.S.A.">
        <title>N-terminal acetylome analyses and functional insights of the N-terminal acetyltransferase NatB.</title>
        <authorList>
            <person name="Van Damme P."/>
            <person name="Lasa M."/>
            <person name="Polevoda B."/>
            <person name="Gazquez C."/>
            <person name="Elosegui-Artola A."/>
            <person name="Kim D.S."/>
            <person name="De Juan-Pardo E."/>
            <person name="Demeyer K."/>
            <person name="Hole K."/>
            <person name="Larrea E."/>
            <person name="Timmerman E."/>
            <person name="Prieto J."/>
            <person name="Arnesen T."/>
            <person name="Sherman F."/>
            <person name="Gevaert K."/>
            <person name="Aldabe R."/>
        </authorList>
    </citation>
    <scope>ACETYLATION [LARGE SCALE ANALYSIS] AT ALA-2</scope>
    <scope>CLEAVAGE OF INITIATOR METHIONINE [LARGE SCALE ANALYSIS]</scope>
    <scope>IDENTIFICATION BY MASS SPECTROMETRY [LARGE SCALE ANALYSIS]</scope>
</reference>
<reference evidence="6" key="6">
    <citation type="journal article" date="2024" name="Dev. Cell">
        <title>CDK5RAP2 activates microtubule nucleator gammaTuRC by facilitating template formation and actin release.</title>
        <authorList>
            <person name="Serna M."/>
            <person name="Zimmermann F."/>
            <person name="Vineethakumari C."/>
            <person name="Gonzalez-Rodriguez N."/>
            <person name="Llorca O."/>
            <person name="Luders J."/>
        </authorList>
    </citation>
    <scope>STRUCTURE BY ELECTRON MICROSCOPY (3.57 ANGSTROMS) IN COMPLEX WITH MZT2A; CDK5RAP2; ACTB AND THE GAMMA-TUBULIN RING COMPLEX</scope>
    <scope>FUNCTION</scope>
    <scope>SUBUNIT</scope>
</reference>
<reference evidence="7 8 9" key="7">
    <citation type="journal article" date="2024" name="Nat. Struct. Mol. Biol.">
        <title>Structure of the gamma-tubulin ring complex-capped microtubule.</title>
        <authorList>
            <person name="Aher A."/>
            <person name="Urnavicius L."/>
            <person name="Xue A."/>
            <person name="Neselu K."/>
            <person name="Kapoor T.M."/>
        </authorList>
    </citation>
    <scope>STRUCTURE BY ELECTRON MICROSCOPY (7.00 ANGSTROMS) IN COMPLEXES WITH ACTB; TUBA1B; TUBB3 AND THE GAMMA-TUBULIN RING COMPLEX</scope>
    <scope>FUNCTION</scope>
    <scope>SUBUNIT</scope>
</reference>
<comment type="function">
    <text evidence="2 3 4">Required for the recruitment and the assembly of the gamma-tubulin ring complex (gTuRC) at the centrosome (PubMed:20360068, PubMed:38609661, PubMed:39321809). The gTuRC regulates the minus-end nucleation of alpha-beta tubulin heterodimers that grow into microtubule protafilaments, a critical step in centrosome duplication and spindle formation (PubMed:38609661, PubMed:39321809).</text>
</comment>
<comment type="subunit">
    <text evidence="2 3 4">Associates with the gamma-tubulin ring complex (gTuRC) consisting of TUBGCP2, TUBGCP3, TUBGCP4, TUBGCP5 and TUBGCP6 and gamma-tubulin TUBG1 or TUBG2; within the complex, interacts with TUBGCP3 and TUBGCP6 to form a luminal bridge with actin that stabilizes the initial structure during complex assembly (PubMed:38609661, PubMed:39321809). Interacts with TUBG1 (PubMed:20360068).</text>
</comment>
<comment type="interaction">
    <interactant intactId="EBI-2637198">
        <id>Q08AG7</id>
    </interactant>
    <interactant intactId="EBI-739784">
        <id>Q9BW66</id>
        <label>CINP</label>
    </interactant>
    <organismsDiffer>false</organismsDiffer>
    <experiments>5</experiments>
</comment>
<comment type="interaction">
    <interactant intactId="EBI-2637198">
        <id>Q08AG7</id>
    </interactant>
    <interactant intactId="EBI-6309037">
        <id>Q8WWM9</id>
        <label>CYGB</label>
    </interactant>
    <organismsDiffer>false</organismsDiffer>
    <experiments>3</experiments>
</comment>
<comment type="interaction">
    <interactant intactId="EBI-2637198">
        <id>Q08AG7</id>
    </interactant>
    <interactant intactId="EBI-2341648">
        <id>Q6ZMU5</id>
        <label>TRIM72</label>
    </interactant>
    <organismsDiffer>false</organismsDiffer>
    <experiments>3</experiments>
</comment>
<comment type="interaction">
    <interactant intactId="EBI-2637198">
        <id>Q08AG7</id>
    </interactant>
    <interactant intactId="EBI-302589">
        <id>P23258</id>
        <label>TUBG1</label>
    </interactant>
    <organismsDiffer>false</organismsDiffer>
    <experiments>5</experiments>
</comment>
<comment type="subcellular location">
    <subcellularLocation>
        <location evidence="2">Cytoplasm</location>
        <location evidence="2">Cytoskeleton</location>
        <location evidence="2">Microtubule organizing center</location>
        <location evidence="2">Centrosome</location>
    </subcellularLocation>
    <subcellularLocation>
        <location evidence="2">Cytoplasm</location>
        <location evidence="2">Cytoskeleton</location>
        <location evidence="2">Spindle</location>
    </subcellularLocation>
</comment>
<comment type="similarity">
    <text evidence="5">Belongs to the MOZART1 family.</text>
</comment>
<organism>
    <name type="scientific">Homo sapiens</name>
    <name type="common">Human</name>
    <dbReference type="NCBI Taxonomy" id="9606"/>
    <lineage>
        <taxon>Eukaryota</taxon>
        <taxon>Metazoa</taxon>
        <taxon>Chordata</taxon>
        <taxon>Craniata</taxon>
        <taxon>Vertebrata</taxon>
        <taxon>Euteleostomi</taxon>
        <taxon>Mammalia</taxon>
        <taxon>Eutheria</taxon>
        <taxon>Euarchontoglires</taxon>
        <taxon>Primates</taxon>
        <taxon>Haplorrhini</taxon>
        <taxon>Catarrhini</taxon>
        <taxon>Hominidae</taxon>
        <taxon>Homo</taxon>
    </lineage>
</organism>
<proteinExistence type="evidence at protein level"/>
<name>MZT1_HUMAN</name>
<evidence type="ECO:0000269" key="1">
    <source>
    </source>
</evidence>
<evidence type="ECO:0000269" key="2">
    <source>
    </source>
</evidence>
<evidence type="ECO:0000269" key="3">
    <source>
    </source>
</evidence>
<evidence type="ECO:0000269" key="4">
    <source>
    </source>
</evidence>
<evidence type="ECO:0000305" key="5"/>
<evidence type="ECO:0007744" key="6">
    <source>
        <dbReference type="PDB" id="8RX1"/>
    </source>
</evidence>
<evidence type="ECO:0007744" key="7">
    <source>
        <dbReference type="PDB" id="8VRD"/>
    </source>
</evidence>
<evidence type="ECO:0007744" key="8">
    <source>
        <dbReference type="PDB" id="8VRJ"/>
    </source>
</evidence>
<evidence type="ECO:0007744" key="9">
    <source>
        <dbReference type="PDB" id="8VRK"/>
    </source>
</evidence>
<evidence type="ECO:0007744" key="10">
    <source>
    </source>
</evidence>
<evidence type="ECO:0007829" key="11">
    <source>
        <dbReference type="PDB" id="6L81"/>
    </source>
</evidence>